<comment type="function">
    <text evidence="1">Major role in the synthesis of nucleoside triphosphates other than ATP. The ATP gamma phosphate is transferred to the NDP beta phosphate via a ping-pong mechanism, using a phosphorylated active-site intermediate.</text>
</comment>
<comment type="catalytic activity">
    <reaction evidence="1">
        <text>a 2'-deoxyribonucleoside 5'-diphosphate + ATP = a 2'-deoxyribonucleoside 5'-triphosphate + ADP</text>
        <dbReference type="Rhea" id="RHEA:44640"/>
        <dbReference type="ChEBI" id="CHEBI:30616"/>
        <dbReference type="ChEBI" id="CHEBI:61560"/>
        <dbReference type="ChEBI" id="CHEBI:73316"/>
        <dbReference type="ChEBI" id="CHEBI:456216"/>
        <dbReference type="EC" id="2.7.4.6"/>
    </reaction>
</comment>
<comment type="catalytic activity">
    <reaction evidence="1">
        <text>a ribonucleoside 5'-diphosphate + ATP = a ribonucleoside 5'-triphosphate + ADP</text>
        <dbReference type="Rhea" id="RHEA:18113"/>
        <dbReference type="ChEBI" id="CHEBI:30616"/>
        <dbReference type="ChEBI" id="CHEBI:57930"/>
        <dbReference type="ChEBI" id="CHEBI:61557"/>
        <dbReference type="ChEBI" id="CHEBI:456216"/>
        <dbReference type="EC" id="2.7.4.6"/>
    </reaction>
</comment>
<comment type="cofactor">
    <cofactor evidence="1">
        <name>Mg(2+)</name>
        <dbReference type="ChEBI" id="CHEBI:18420"/>
    </cofactor>
</comment>
<comment type="subunit">
    <text evidence="1">Homotetramer.</text>
</comment>
<comment type="subcellular location">
    <subcellularLocation>
        <location evidence="1">Cytoplasm</location>
    </subcellularLocation>
</comment>
<comment type="similarity">
    <text evidence="1">Belongs to the NDK family.</text>
</comment>
<organism>
    <name type="scientific">Agrobacterium fabrum (strain C58 / ATCC 33970)</name>
    <name type="common">Agrobacterium tumefaciens (strain C58)</name>
    <dbReference type="NCBI Taxonomy" id="176299"/>
    <lineage>
        <taxon>Bacteria</taxon>
        <taxon>Pseudomonadati</taxon>
        <taxon>Pseudomonadota</taxon>
        <taxon>Alphaproteobacteria</taxon>
        <taxon>Hyphomicrobiales</taxon>
        <taxon>Rhizobiaceae</taxon>
        <taxon>Rhizobium/Agrobacterium group</taxon>
        <taxon>Agrobacterium</taxon>
        <taxon>Agrobacterium tumefaciens complex</taxon>
    </lineage>
</organism>
<accession>Q8UGB6</accession>
<sequence length="140" mass="15334">MAIERTFSMIKPDATKRNLTGAITKVFEDNGLRIVASKRVWMSKREAEGFYAVHKERPFFGELVEGMTSGPTIVQVLEGENAILKNREIMGATNPAQAAEGTIRKSFALSIGENSVHGSDAPETAAQEIAYWFAETEIVG</sequence>
<gene>
    <name evidence="1" type="primary">ndk</name>
    <name type="ordered locus">Atu1122</name>
    <name type="ORF">AGR_C_2077</name>
</gene>
<keyword id="KW-0067">ATP-binding</keyword>
<keyword id="KW-0963">Cytoplasm</keyword>
<keyword id="KW-0418">Kinase</keyword>
<keyword id="KW-0460">Magnesium</keyword>
<keyword id="KW-0479">Metal-binding</keyword>
<keyword id="KW-0546">Nucleotide metabolism</keyword>
<keyword id="KW-0547">Nucleotide-binding</keyword>
<keyword id="KW-0597">Phosphoprotein</keyword>
<keyword id="KW-1185">Reference proteome</keyword>
<keyword id="KW-0808">Transferase</keyword>
<dbReference type="EC" id="2.7.4.6" evidence="1"/>
<dbReference type="EMBL" id="AE007869">
    <property type="protein sequence ID" value="AAK86926.1"/>
    <property type="molecule type" value="Genomic_DNA"/>
</dbReference>
<dbReference type="PIR" id="AI2714">
    <property type="entry name" value="AI2714"/>
</dbReference>
<dbReference type="PIR" id="E97496">
    <property type="entry name" value="E97496"/>
</dbReference>
<dbReference type="RefSeq" id="NP_354141.1">
    <property type="nucleotide sequence ID" value="NC_003062.2"/>
</dbReference>
<dbReference type="RefSeq" id="WP_003502118.1">
    <property type="nucleotide sequence ID" value="NC_003062.2"/>
</dbReference>
<dbReference type="SMR" id="Q8UGB6"/>
<dbReference type="STRING" id="176299.Atu1122"/>
<dbReference type="EnsemblBacteria" id="AAK86926">
    <property type="protein sequence ID" value="AAK86926"/>
    <property type="gene ID" value="Atu1122"/>
</dbReference>
<dbReference type="GeneID" id="97363865"/>
<dbReference type="KEGG" id="atu:Atu1122"/>
<dbReference type="PATRIC" id="fig|176299.10.peg.1139"/>
<dbReference type="eggNOG" id="COG0105">
    <property type="taxonomic scope" value="Bacteria"/>
</dbReference>
<dbReference type="HOGENOM" id="CLU_060216_8_1_5"/>
<dbReference type="OrthoDB" id="9801161at2"/>
<dbReference type="PhylomeDB" id="Q8UGB6"/>
<dbReference type="BioCyc" id="AGRO:ATU1122-MONOMER"/>
<dbReference type="Proteomes" id="UP000000813">
    <property type="component" value="Chromosome circular"/>
</dbReference>
<dbReference type="GO" id="GO:0005737">
    <property type="term" value="C:cytoplasm"/>
    <property type="evidence" value="ECO:0007669"/>
    <property type="project" value="UniProtKB-SubCell"/>
</dbReference>
<dbReference type="GO" id="GO:0005524">
    <property type="term" value="F:ATP binding"/>
    <property type="evidence" value="ECO:0007669"/>
    <property type="project" value="UniProtKB-UniRule"/>
</dbReference>
<dbReference type="GO" id="GO:0046872">
    <property type="term" value="F:metal ion binding"/>
    <property type="evidence" value="ECO:0007669"/>
    <property type="project" value="UniProtKB-KW"/>
</dbReference>
<dbReference type="GO" id="GO:0004550">
    <property type="term" value="F:nucleoside diphosphate kinase activity"/>
    <property type="evidence" value="ECO:0007669"/>
    <property type="project" value="UniProtKB-UniRule"/>
</dbReference>
<dbReference type="GO" id="GO:0006241">
    <property type="term" value="P:CTP biosynthetic process"/>
    <property type="evidence" value="ECO:0007669"/>
    <property type="project" value="UniProtKB-UniRule"/>
</dbReference>
<dbReference type="GO" id="GO:0006183">
    <property type="term" value="P:GTP biosynthetic process"/>
    <property type="evidence" value="ECO:0007669"/>
    <property type="project" value="UniProtKB-UniRule"/>
</dbReference>
<dbReference type="GO" id="GO:0006228">
    <property type="term" value="P:UTP biosynthetic process"/>
    <property type="evidence" value="ECO:0007669"/>
    <property type="project" value="UniProtKB-UniRule"/>
</dbReference>
<dbReference type="CDD" id="cd04413">
    <property type="entry name" value="NDPk_I"/>
    <property type="match status" value="1"/>
</dbReference>
<dbReference type="FunFam" id="3.30.70.141:FF:000001">
    <property type="entry name" value="Nucleoside diphosphate kinase"/>
    <property type="match status" value="1"/>
</dbReference>
<dbReference type="Gene3D" id="3.30.70.141">
    <property type="entry name" value="Nucleoside diphosphate kinase-like domain"/>
    <property type="match status" value="1"/>
</dbReference>
<dbReference type="HAMAP" id="MF_00451">
    <property type="entry name" value="NDP_kinase"/>
    <property type="match status" value="1"/>
</dbReference>
<dbReference type="InterPro" id="IPR034907">
    <property type="entry name" value="NDK-like_dom"/>
</dbReference>
<dbReference type="InterPro" id="IPR036850">
    <property type="entry name" value="NDK-like_dom_sf"/>
</dbReference>
<dbReference type="InterPro" id="IPR001564">
    <property type="entry name" value="Nucleoside_diP_kinase"/>
</dbReference>
<dbReference type="InterPro" id="IPR023005">
    <property type="entry name" value="Nucleoside_diP_kinase_AS"/>
</dbReference>
<dbReference type="NCBIfam" id="NF001908">
    <property type="entry name" value="PRK00668.1"/>
    <property type="match status" value="1"/>
</dbReference>
<dbReference type="PANTHER" id="PTHR11349">
    <property type="entry name" value="NUCLEOSIDE DIPHOSPHATE KINASE"/>
    <property type="match status" value="1"/>
</dbReference>
<dbReference type="Pfam" id="PF00334">
    <property type="entry name" value="NDK"/>
    <property type="match status" value="1"/>
</dbReference>
<dbReference type="PRINTS" id="PR01243">
    <property type="entry name" value="NUCDPKINASE"/>
</dbReference>
<dbReference type="SMART" id="SM00562">
    <property type="entry name" value="NDK"/>
    <property type="match status" value="1"/>
</dbReference>
<dbReference type="SUPFAM" id="SSF54919">
    <property type="entry name" value="Nucleoside diphosphate kinase, NDK"/>
    <property type="match status" value="1"/>
</dbReference>
<dbReference type="PROSITE" id="PS00469">
    <property type="entry name" value="NDPK"/>
    <property type="match status" value="1"/>
</dbReference>
<dbReference type="PROSITE" id="PS51374">
    <property type="entry name" value="NDPK_LIKE"/>
    <property type="match status" value="1"/>
</dbReference>
<proteinExistence type="inferred from homology"/>
<feature type="chain" id="PRO_0000136933" description="Nucleoside diphosphate kinase">
    <location>
        <begin position="1"/>
        <end position="140"/>
    </location>
</feature>
<feature type="active site" description="Pros-phosphohistidine intermediate" evidence="1">
    <location>
        <position position="117"/>
    </location>
</feature>
<feature type="binding site" evidence="1">
    <location>
        <position position="11"/>
    </location>
    <ligand>
        <name>ATP</name>
        <dbReference type="ChEBI" id="CHEBI:30616"/>
    </ligand>
</feature>
<feature type="binding site" evidence="1">
    <location>
        <position position="59"/>
    </location>
    <ligand>
        <name>ATP</name>
        <dbReference type="ChEBI" id="CHEBI:30616"/>
    </ligand>
</feature>
<feature type="binding site" evidence="1">
    <location>
        <position position="87"/>
    </location>
    <ligand>
        <name>ATP</name>
        <dbReference type="ChEBI" id="CHEBI:30616"/>
    </ligand>
</feature>
<feature type="binding site" evidence="1">
    <location>
        <position position="93"/>
    </location>
    <ligand>
        <name>ATP</name>
        <dbReference type="ChEBI" id="CHEBI:30616"/>
    </ligand>
</feature>
<feature type="binding site" evidence="1">
    <location>
        <position position="104"/>
    </location>
    <ligand>
        <name>ATP</name>
        <dbReference type="ChEBI" id="CHEBI:30616"/>
    </ligand>
</feature>
<feature type="binding site" evidence="1">
    <location>
        <position position="114"/>
    </location>
    <ligand>
        <name>ATP</name>
        <dbReference type="ChEBI" id="CHEBI:30616"/>
    </ligand>
</feature>
<evidence type="ECO:0000255" key="1">
    <source>
        <dbReference type="HAMAP-Rule" id="MF_00451"/>
    </source>
</evidence>
<reference key="1">
    <citation type="journal article" date="2001" name="Science">
        <title>The genome of the natural genetic engineer Agrobacterium tumefaciens C58.</title>
        <authorList>
            <person name="Wood D.W."/>
            <person name="Setubal J.C."/>
            <person name="Kaul R."/>
            <person name="Monks D.E."/>
            <person name="Kitajima J.P."/>
            <person name="Okura V.K."/>
            <person name="Zhou Y."/>
            <person name="Chen L."/>
            <person name="Wood G.E."/>
            <person name="Almeida N.F. Jr."/>
            <person name="Woo L."/>
            <person name="Chen Y."/>
            <person name="Paulsen I.T."/>
            <person name="Eisen J.A."/>
            <person name="Karp P.D."/>
            <person name="Bovee D. Sr."/>
            <person name="Chapman P."/>
            <person name="Clendenning J."/>
            <person name="Deatherage G."/>
            <person name="Gillet W."/>
            <person name="Grant C."/>
            <person name="Kutyavin T."/>
            <person name="Levy R."/>
            <person name="Li M.-J."/>
            <person name="McClelland E."/>
            <person name="Palmieri A."/>
            <person name="Raymond C."/>
            <person name="Rouse G."/>
            <person name="Saenphimmachak C."/>
            <person name="Wu Z."/>
            <person name="Romero P."/>
            <person name="Gordon D."/>
            <person name="Zhang S."/>
            <person name="Yoo H."/>
            <person name="Tao Y."/>
            <person name="Biddle P."/>
            <person name="Jung M."/>
            <person name="Krespan W."/>
            <person name="Perry M."/>
            <person name="Gordon-Kamm B."/>
            <person name="Liao L."/>
            <person name="Kim S."/>
            <person name="Hendrick C."/>
            <person name="Zhao Z.-Y."/>
            <person name="Dolan M."/>
            <person name="Chumley F."/>
            <person name="Tingey S.V."/>
            <person name="Tomb J.-F."/>
            <person name="Gordon M.P."/>
            <person name="Olson M.V."/>
            <person name="Nester E.W."/>
        </authorList>
    </citation>
    <scope>NUCLEOTIDE SEQUENCE [LARGE SCALE GENOMIC DNA]</scope>
    <source>
        <strain>C58 / ATCC 33970</strain>
    </source>
</reference>
<reference key="2">
    <citation type="journal article" date="2001" name="Science">
        <title>Genome sequence of the plant pathogen and biotechnology agent Agrobacterium tumefaciens C58.</title>
        <authorList>
            <person name="Goodner B."/>
            <person name="Hinkle G."/>
            <person name="Gattung S."/>
            <person name="Miller N."/>
            <person name="Blanchard M."/>
            <person name="Qurollo B."/>
            <person name="Goldman B.S."/>
            <person name="Cao Y."/>
            <person name="Askenazi M."/>
            <person name="Halling C."/>
            <person name="Mullin L."/>
            <person name="Houmiel K."/>
            <person name="Gordon J."/>
            <person name="Vaudin M."/>
            <person name="Iartchouk O."/>
            <person name="Epp A."/>
            <person name="Liu F."/>
            <person name="Wollam C."/>
            <person name="Allinger M."/>
            <person name="Doughty D."/>
            <person name="Scott C."/>
            <person name="Lappas C."/>
            <person name="Markelz B."/>
            <person name="Flanagan C."/>
            <person name="Crowell C."/>
            <person name="Gurson J."/>
            <person name="Lomo C."/>
            <person name="Sear C."/>
            <person name="Strub G."/>
            <person name="Cielo C."/>
            <person name="Slater S."/>
        </authorList>
    </citation>
    <scope>NUCLEOTIDE SEQUENCE [LARGE SCALE GENOMIC DNA]</scope>
    <source>
        <strain>C58 / ATCC 33970</strain>
    </source>
</reference>
<name>NDK_AGRFC</name>
<protein>
    <recommendedName>
        <fullName evidence="1">Nucleoside diphosphate kinase</fullName>
        <shortName evidence="1">NDK</shortName>
        <shortName evidence="1">NDP kinase</shortName>
        <ecNumber evidence="1">2.7.4.6</ecNumber>
    </recommendedName>
    <alternativeName>
        <fullName evidence="1">Nucleoside-2-P kinase</fullName>
    </alternativeName>
</protein>